<reference key="1">
    <citation type="journal article" date="1995" name="Arch. Microbiol.">
        <title>Analysis of the genes forming the distal parts of the two cbb CO2 fixation operons from Alcaligenes eutrophus.</title>
        <authorList>
            <person name="Schaeferfohann J."/>
            <person name="Yoo J.-G."/>
            <person name="Bowien B."/>
        </authorList>
    </citation>
    <scope>NUCLEOTIDE SEQUENCE [GENOMIC DNA]</scope>
</reference>
<reference key="2">
    <citation type="journal article" date="2003" name="J. Mol. Biol.">
        <title>Complete nucleotide sequence of pHG1: a Ralstonia eutropha H16 megaplasmid encoding key enzymes of H(2)-based lithoautotrophy and anaerobiosis.</title>
        <authorList>
            <person name="Schwartz E."/>
            <person name="Henne A."/>
            <person name="Cramm R."/>
            <person name="Eitinger T."/>
            <person name="Friedrich B."/>
            <person name="Gottschalk G."/>
        </authorList>
    </citation>
    <scope>NUCLEOTIDE SEQUENCE [LARGE SCALE GENOMIC DNA]</scope>
    <source>
        <strain>ATCC 17699 / DSM 428 / KCTC 22496 / NCIMB 10442 / H16 / Stanier 337</strain>
    </source>
</reference>
<sequence length="412" mass="42299">MMSLSHASVPHTNPTAPHTLAALLAAGGLAGKRVFIRADLNVPQDAAGDITDDTRIRASVPAIAACLQAGAAVMVTSHLGRPQEGAPDPRHSLAPVGRRLSELLGRQVPLLSGWTEGGFQVPPGQVVLLENCRMNTGEKKNSDELAQKMAALCDVYVNDAFGTAHRAEATTHGIARYAPVACAGPLLAAEIDALGKALGQPARPLVAIVAGSKVSTKLTILKSLADKVDNLVVGGGIANTFMLAAGLKIGKSLAEPDLLADARAIIDIMAARGASVPIPVDVVCAKEFSATAAAAVKDVRDVADDDMILDIGPKTAAMLADQLKAAGTIVWNGPVGVFEFDQFGNGTRVLAQAIAESKAFSIAGGGDTLAAIAKYGIADRVGYISTGGGAFLEFLEGKKLPALDVLEQRAAS</sequence>
<proteinExistence type="inferred from homology"/>
<organism>
    <name type="scientific">Cupriavidus necator (strain ATCC 17699 / DSM 428 / KCTC 22496 / NCIMB 10442 / H16 / Stanier 337)</name>
    <name type="common">Ralstonia eutropha</name>
    <dbReference type="NCBI Taxonomy" id="381666"/>
    <lineage>
        <taxon>Bacteria</taxon>
        <taxon>Pseudomonadati</taxon>
        <taxon>Pseudomonadota</taxon>
        <taxon>Betaproteobacteria</taxon>
        <taxon>Burkholderiales</taxon>
        <taxon>Burkholderiaceae</taxon>
        <taxon>Cupriavidus</taxon>
    </lineage>
</organism>
<keyword id="KW-0067">ATP-binding</keyword>
<keyword id="KW-0113">Calvin cycle</keyword>
<keyword id="KW-0963">Cytoplasm</keyword>
<keyword id="KW-0418">Kinase</keyword>
<keyword id="KW-0547">Nucleotide-binding</keyword>
<keyword id="KW-0614">Plasmid</keyword>
<keyword id="KW-1185">Reference proteome</keyword>
<keyword id="KW-0808">Transferase</keyword>
<dbReference type="EC" id="2.7.2.3"/>
<dbReference type="EMBL" id="U12423">
    <property type="protein sequence ID" value="AAC43447.1"/>
    <property type="molecule type" value="Genomic_DNA"/>
</dbReference>
<dbReference type="EMBL" id="AY305378">
    <property type="protein sequence ID" value="AAP86166.1"/>
    <property type="molecule type" value="Genomic_DNA"/>
</dbReference>
<dbReference type="PIR" id="I39554">
    <property type="entry name" value="I39554"/>
</dbReference>
<dbReference type="RefSeq" id="WP_011154329.1">
    <property type="nucleotide sequence ID" value="NC_005241.1"/>
</dbReference>
<dbReference type="SMR" id="P50320"/>
<dbReference type="KEGG" id="reh:PHG417"/>
<dbReference type="eggNOG" id="COG0126">
    <property type="taxonomic scope" value="Bacteria"/>
</dbReference>
<dbReference type="HOGENOM" id="CLU_025427_0_2_4"/>
<dbReference type="OrthoDB" id="9808460at2"/>
<dbReference type="UniPathway" id="UPA00116"/>
<dbReference type="Proteomes" id="UP000008210">
    <property type="component" value="Plasmid megaplasmid pHG1"/>
</dbReference>
<dbReference type="GO" id="GO:0005829">
    <property type="term" value="C:cytosol"/>
    <property type="evidence" value="ECO:0007669"/>
    <property type="project" value="TreeGrafter"/>
</dbReference>
<dbReference type="GO" id="GO:0043531">
    <property type="term" value="F:ADP binding"/>
    <property type="evidence" value="ECO:0007669"/>
    <property type="project" value="TreeGrafter"/>
</dbReference>
<dbReference type="GO" id="GO:0005524">
    <property type="term" value="F:ATP binding"/>
    <property type="evidence" value="ECO:0007669"/>
    <property type="project" value="UniProtKB-KW"/>
</dbReference>
<dbReference type="GO" id="GO:0004618">
    <property type="term" value="F:phosphoglycerate kinase activity"/>
    <property type="evidence" value="ECO:0007669"/>
    <property type="project" value="UniProtKB-UniRule"/>
</dbReference>
<dbReference type="GO" id="GO:0006094">
    <property type="term" value="P:gluconeogenesis"/>
    <property type="evidence" value="ECO:0007669"/>
    <property type="project" value="TreeGrafter"/>
</dbReference>
<dbReference type="GO" id="GO:0006096">
    <property type="term" value="P:glycolytic process"/>
    <property type="evidence" value="ECO:0007669"/>
    <property type="project" value="UniProtKB-UniRule"/>
</dbReference>
<dbReference type="GO" id="GO:0019253">
    <property type="term" value="P:reductive pentose-phosphate cycle"/>
    <property type="evidence" value="ECO:0007669"/>
    <property type="project" value="UniProtKB-UniPathway"/>
</dbReference>
<dbReference type="FunFam" id="3.40.50.1260:FF:000001">
    <property type="entry name" value="Phosphoglycerate kinase"/>
    <property type="match status" value="1"/>
</dbReference>
<dbReference type="FunFam" id="3.40.50.1260:FF:000002">
    <property type="entry name" value="Phosphoglycerate kinase"/>
    <property type="match status" value="1"/>
</dbReference>
<dbReference type="Gene3D" id="3.40.50.1260">
    <property type="entry name" value="Phosphoglycerate kinase, N-terminal domain"/>
    <property type="match status" value="2"/>
</dbReference>
<dbReference type="HAMAP" id="MF_00145">
    <property type="entry name" value="Phosphoglyc_kinase"/>
    <property type="match status" value="1"/>
</dbReference>
<dbReference type="InterPro" id="IPR001576">
    <property type="entry name" value="Phosphoglycerate_kinase"/>
</dbReference>
<dbReference type="InterPro" id="IPR015911">
    <property type="entry name" value="Phosphoglycerate_kinase_CS"/>
</dbReference>
<dbReference type="InterPro" id="IPR015824">
    <property type="entry name" value="Phosphoglycerate_kinase_N"/>
</dbReference>
<dbReference type="InterPro" id="IPR036043">
    <property type="entry name" value="Phosphoglycerate_kinase_sf"/>
</dbReference>
<dbReference type="PANTHER" id="PTHR11406">
    <property type="entry name" value="PHOSPHOGLYCERATE KINASE"/>
    <property type="match status" value="1"/>
</dbReference>
<dbReference type="PANTHER" id="PTHR11406:SF23">
    <property type="entry name" value="PHOSPHOGLYCERATE KINASE 1, CHLOROPLASTIC-RELATED"/>
    <property type="match status" value="1"/>
</dbReference>
<dbReference type="Pfam" id="PF00162">
    <property type="entry name" value="PGK"/>
    <property type="match status" value="1"/>
</dbReference>
<dbReference type="PIRSF" id="PIRSF000724">
    <property type="entry name" value="Pgk"/>
    <property type="match status" value="1"/>
</dbReference>
<dbReference type="PRINTS" id="PR00477">
    <property type="entry name" value="PHGLYCKINASE"/>
</dbReference>
<dbReference type="SUPFAM" id="SSF53748">
    <property type="entry name" value="Phosphoglycerate kinase"/>
    <property type="match status" value="1"/>
</dbReference>
<dbReference type="PROSITE" id="PS00111">
    <property type="entry name" value="PGLYCERATE_KINASE"/>
    <property type="match status" value="1"/>
</dbReference>
<comment type="catalytic activity">
    <reaction>
        <text>(2R)-3-phosphoglycerate + ATP = (2R)-3-phospho-glyceroyl phosphate + ADP</text>
        <dbReference type="Rhea" id="RHEA:14801"/>
        <dbReference type="ChEBI" id="CHEBI:30616"/>
        <dbReference type="ChEBI" id="CHEBI:57604"/>
        <dbReference type="ChEBI" id="CHEBI:58272"/>
        <dbReference type="ChEBI" id="CHEBI:456216"/>
        <dbReference type="EC" id="2.7.2.3"/>
    </reaction>
</comment>
<comment type="pathway">
    <text>Carbohydrate biosynthesis; Calvin cycle.</text>
</comment>
<comment type="subunit">
    <text evidence="1">Monomer.</text>
</comment>
<comment type="subcellular location">
    <subcellularLocation>
        <location evidence="2">Cytoplasm</location>
    </subcellularLocation>
</comment>
<comment type="similarity">
    <text evidence="2">Belongs to the phosphoglycerate kinase family.</text>
</comment>
<accession>P50320</accession>
<evidence type="ECO:0000250" key="1"/>
<evidence type="ECO:0000305" key="2"/>
<feature type="chain" id="PRO_0000145896" description="Phosphoglycerate kinase, plasmid">
    <location>
        <begin position="1"/>
        <end position="412"/>
    </location>
</feature>
<feature type="binding site" evidence="1">
    <location>
        <begin position="39"/>
        <end position="41"/>
    </location>
    <ligand>
        <name>substrate</name>
    </ligand>
</feature>
<feature type="binding site" evidence="1">
    <location>
        <position position="55"/>
    </location>
    <ligand>
        <name>substrate</name>
    </ligand>
</feature>
<feature type="binding site" evidence="1">
    <location>
        <begin position="78"/>
        <end position="81"/>
    </location>
    <ligand>
        <name>substrate</name>
    </ligand>
</feature>
<feature type="binding site" evidence="1">
    <location>
        <position position="133"/>
    </location>
    <ligand>
        <name>substrate</name>
    </ligand>
</feature>
<feature type="binding site" evidence="1">
    <location>
        <position position="166"/>
    </location>
    <ligand>
        <name>substrate</name>
    </ligand>
</feature>
<feature type="binding site" evidence="1">
    <location>
        <position position="217"/>
    </location>
    <ligand>
        <name>ATP</name>
        <dbReference type="ChEBI" id="CHEBI:30616"/>
    </ligand>
</feature>
<feature type="binding site" evidence="1">
    <location>
        <position position="339"/>
    </location>
    <ligand>
        <name>ATP</name>
        <dbReference type="ChEBI" id="CHEBI:30616"/>
    </ligand>
</feature>
<feature type="binding site" evidence="1">
    <location>
        <begin position="365"/>
        <end position="368"/>
    </location>
    <ligand>
        <name>ATP</name>
        <dbReference type="ChEBI" id="CHEBI:30616"/>
    </ligand>
</feature>
<geneLocation type="plasmid">
    <name>megaplasmid pHG1</name>
</geneLocation>
<name>PGKP_CUPNH</name>
<gene>
    <name type="primary">cbbKP</name>
    <name type="ordered locus">PHG417</name>
</gene>
<protein>
    <recommendedName>
        <fullName>Phosphoglycerate kinase, plasmid</fullName>
        <ecNumber>2.7.2.3</ecNumber>
    </recommendedName>
</protein>